<feature type="chain" id="PRO_1000190720" description="2-C-methyl-D-erythritol 2,4-cyclodiphosphate synthase">
    <location>
        <begin position="1"/>
        <end position="165"/>
    </location>
</feature>
<feature type="binding site" evidence="1">
    <location>
        <begin position="13"/>
        <end position="15"/>
    </location>
    <ligand>
        <name>4-CDP-2-C-methyl-D-erythritol 2-phosphate</name>
        <dbReference type="ChEBI" id="CHEBI:57919"/>
    </ligand>
</feature>
<feature type="binding site" evidence="1">
    <location>
        <position position="13"/>
    </location>
    <ligand>
        <name>a divalent metal cation</name>
        <dbReference type="ChEBI" id="CHEBI:60240"/>
    </ligand>
</feature>
<feature type="binding site" evidence="1">
    <location>
        <position position="15"/>
    </location>
    <ligand>
        <name>a divalent metal cation</name>
        <dbReference type="ChEBI" id="CHEBI:60240"/>
    </ligand>
</feature>
<feature type="binding site" evidence="1">
    <location>
        <begin position="39"/>
        <end position="40"/>
    </location>
    <ligand>
        <name>4-CDP-2-C-methyl-D-erythritol 2-phosphate</name>
        <dbReference type="ChEBI" id="CHEBI:57919"/>
    </ligand>
</feature>
<feature type="binding site" evidence="1">
    <location>
        <position position="47"/>
    </location>
    <ligand>
        <name>a divalent metal cation</name>
        <dbReference type="ChEBI" id="CHEBI:60240"/>
    </ligand>
</feature>
<feature type="binding site" evidence="1">
    <location>
        <begin position="61"/>
        <end position="63"/>
    </location>
    <ligand>
        <name>4-CDP-2-C-methyl-D-erythritol 2-phosphate</name>
        <dbReference type="ChEBI" id="CHEBI:57919"/>
    </ligand>
</feature>
<feature type="binding site" evidence="1">
    <location>
        <position position="141"/>
    </location>
    <ligand>
        <name>4-CDP-2-C-methyl-D-erythritol 2-phosphate</name>
        <dbReference type="ChEBI" id="CHEBI:57919"/>
    </ligand>
</feature>
<feature type="site" description="Transition state stabilizer" evidence="1">
    <location>
        <position position="39"/>
    </location>
</feature>
<feature type="site" description="Transition state stabilizer" evidence="1">
    <location>
        <position position="135"/>
    </location>
</feature>
<proteinExistence type="inferred from homology"/>
<dbReference type="EC" id="4.6.1.12" evidence="1"/>
<dbReference type="EMBL" id="CP000916">
    <property type="protein sequence ID" value="ACM22186.1"/>
    <property type="molecule type" value="Genomic_DNA"/>
</dbReference>
<dbReference type="SMR" id="B9KAZ0"/>
<dbReference type="STRING" id="309803.CTN_0010"/>
<dbReference type="KEGG" id="tna:CTN_0010"/>
<dbReference type="eggNOG" id="COG0245">
    <property type="taxonomic scope" value="Bacteria"/>
</dbReference>
<dbReference type="HOGENOM" id="CLU_084630_2_0_0"/>
<dbReference type="UniPathway" id="UPA00056">
    <property type="reaction ID" value="UER00095"/>
</dbReference>
<dbReference type="Proteomes" id="UP000000445">
    <property type="component" value="Chromosome"/>
</dbReference>
<dbReference type="GO" id="GO:0008685">
    <property type="term" value="F:2-C-methyl-D-erythritol 2,4-cyclodiphosphate synthase activity"/>
    <property type="evidence" value="ECO:0007669"/>
    <property type="project" value="UniProtKB-UniRule"/>
</dbReference>
<dbReference type="GO" id="GO:0046872">
    <property type="term" value="F:metal ion binding"/>
    <property type="evidence" value="ECO:0007669"/>
    <property type="project" value="UniProtKB-KW"/>
</dbReference>
<dbReference type="GO" id="GO:0019288">
    <property type="term" value="P:isopentenyl diphosphate biosynthetic process, methylerythritol 4-phosphate pathway"/>
    <property type="evidence" value="ECO:0007669"/>
    <property type="project" value="UniProtKB-UniRule"/>
</dbReference>
<dbReference type="GO" id="GO:0016114">
    <property type="term" value="P:terpenoid biosynthetic process"/>
    <property type="evidence" value="ECO:0007669"/>
    <property type="project" value="InterPro"/>
</dbReference>
<dbReference type="CDD" id="cd00554">
    <property type="entry name" value="MECDP_synthase"/>
    <property type="match status" value="1"/>
</dbReference>
<dbReference type="FunFam" id="3.30.1330.50:FF:000003">
    <property type="entry name" value="2-C-methyl-D-erythritol 2,4-cyclodiphosphate synthase"/>
    <property type="match status" value="1"/>
</dbReference>
<dbReference type="Gene3D" id="3.30.1330.50">
    <property type="entry name" value="2-C-methyl-D-erythritol 2,4-cyclodiphosphate synthase"/>
    <property type="match status" value="1"/>
</dbReference>
<dbReference type="HAMAP" id="MF_00107">
    <property type="entry name" value="IspF"/>
    <property type="match status" value="1"/>
</dbReference>
<dbReference type="InterPro" id="IPR003526">
    <property type="entry name" value="MECDP_synthase"/>
</dbReference>
<dbReference type="InterPro" id="IPR020555">
    <property type="entry name" value="MECDP_synthase_CS"/>
</dbReference>
<dbReference type="InterPro" id="IPR036571">
    <property type="entry name" value="MECDP_synthase_sf"/>
</dbReference>
<dbReference type="NCBIfam" id="TIGR00151">
    <property type="entry name" value="ispF"/>
    <property type="match status" value="1"/>
</dbReference>
<dbReference type="PANTHER" id="PTHR43181">
    <property type="entry name" value="2-C-METHYL-D-ERYTHRITOL 2,4-CYCLODIPHOSPHATE SYNTHASE, CHLOROPLASTIC"/>
    <property type="match status" value="1"/>
</dbReference>
<dbReference type="PANTHER" id="PTHR43181:SF1">
    <property type="entry name" value="2-C-METHYL-D-ERYTHRITOL 2,4-CYCLODIPHOSPHATE SYNTHASE, CHLOROPLASTIC"/>
    <property type="match status" value="1"/>
</dbReference>
<dbReference type="Pfam" id="PF02542">
    <property type="entry name" value="YgbB"/>
    <property type="match status" value="1"/>
</dbReference>
<dbReference type="SUPFAM" id="SSF69765">
    <property type="entry name" value="IpsF-like"/>
    <property type="match status" value="1"/>
</dbReference>
<dbReference type="PROSITE" id="PS01350">
    <property type="entry name" value="ISPF"/>
    <property type="match status" value="1"/>
</dbReference>
<protein>
    <recommendedName>
        <fullName evidence="1">2-C-methyl-D-erythritol 2,4-cyclodiphosphate synthase</fullName>
        <shortName evidence="1">MECDP-synthase</shortName>
        <shortName evidence="1">MECPP-synthase</shortName>
        <shortName evidence="1">MECPS</shortName>
        <ecNumber evidence="1">4.6.1.12</ecNumber>
    </recommendedName>
</protein>
<reference key="1">
    <citation type="submission" date="2007-11" db="EMBL/GenBank/DDBJ databases">
        <title>The genome sequence of the hyperthermophilic bacterium Thermotoga neapolitana.</title>
        <authorList>
            <person name="Lim S.K."/>
            <person name="Kim J.S."/>
            <person name="Cha S.H."/>
            <person name="Park B.C."/>
            <person name="Lee D.S."/>
            <person name="Tae H.S."/>
            <person name="Kim S.-J."/>
            <person name="Kim J.J."/>
            <person name="Park K.J."/>
            <person name="Lee S.Y."/>
        </authorList>
    </citation>
    <scope>NUCLEOTIDE SEQUENCE [LARGE SCALE GENOMIC DNA]</scope>
    <source>
        <strain>ATCC 49049 / DSM 4359 / NBRC 107923 / NS-E</strain>
    </source>
</reference>
<keyword id="KW-0414">Isoprene biosynthesis</keyword>
<keyword id="KW-0456">Lyase</keyword>
<keyword id="KW-0479">Metal-binding</keyword>
<name>ISPF_THENN</name>
<gene>
    <name evidence="1" type="primary">ispF</name>
    <name type="ordered locus">CTN_0010</name>
</gene>
<organism>
    <name type="scientific">Thermotoga neapolitana (strain ATCC 49049 / DSM 4359 / NBRC 107923 / NS-E)</name>
    <dbReference type="NCBI Taxonomy" id="309803"/>
    <lineage>
        <taxon>Bacteria</taxon>
        <taxon>Thermotogati</taxon>
        <taxon>Thermotogota</taxon>
        <taxon>Thermotogae</taxon>
        <taxon>Thermotogales</taxon>
        <taxon>Thermotogaceae</taxon>
        <taxon>Thermotoga</taxon>
    </lineage>
</organism>
<comment type="function">
    <text evidence="1">Involved in the biosynthesis of isopentenyl diphosphate (IPP) and dimethylallyl diphosphate (DMAPP), two major building blocks of isoprenoid compounds. Catalyzes the conversion of 4-diphosphocytidyl-2-C-methyl-D-erythritol 2-phosphate (CDP-ME2P) to 2-C-methyl-D-erythritol 2,4-cyclodiphosphate (ME-CPP) with a corresponding release of cytidine 5-monophosphate (CMP).</text>
</comment>
<comment type="catalytic activity">
    <reaction evidence="1">
        <text>4-CDP-2-C-methyl-D-erythritol 2-phosphate = 2-C-methyl-D-erythritol 2,4-cyclic diphosphate + CMP</text>
        <dbReference type="Rhea" id="RHEA:23864"/>
        <dbReference type="ChEBI" id="CHEBI:57919"/>
        <dbReference type="ChEBI" id="CHEBI:58483"/>
        <dbReference type="ChEBI" id="CHEBI:60377"/>
        <dbReference type="EC" id="4.6.1.12"/>
    </reaction>
</comment>
<comment type="cofactor">
    <cofactor evidence="1">
        <name>a divalent metal cation</name>
        <dbReference type="ChEBI" id="CHEBI:60240"/>
    </cofactor>
    <text evidence="1">Binds 1 divalent metal cation per subunit.</text>
</comment>
<comment type="pathway">
    <text evidence="1">Isoprenoid biosynthesis; isopentenyl diphosphate biosynthesis via DXP pathway; isopentenyl diphosphate from 1-deoxy-D-xylulose 5-phosphate: step 4/6.</text>
</comment>
<comment type="subunit">
    <text evidence="1">Homotrimer.</text>
</comment>
<comment type="similarity">
    <text evidence="1">Belongs to the IspF family.</text>
</comment>
<evidence type="ECO:0000255" key="1">
    <source>
        <dbReference type="HAMAP-Rule" id="MF_00107"/>
    </source>
</evidence>
<accession>B9KAZ0</accession>
<sequence>MESDSMFIGFGYDRHPLVEGRRLVLAGVEIDAPLGSLGHSDGDVLSHAIIDALLGAGCLGDIGTWFPETKEYKDANSLDLLKETVKILEERGFSVVNVDATVVASIVKLSPYREKILENLKSALETSRVNVKFKSGNTLGFEGEERGISAYAVCLVEEKKCTKSI</sequence>